<dbReference type="EC" id="4.2.1.108" evidence="1"/>
<dbReference type="EMBL" id="CP000518">
    <property type="protein sequence ID" value="ABL93450.1"/>
    <property type="molecule type" value="Genomic_DNA"/>
</dbReference>
<dbReference type="SMR" id="A1UKU2"/>
<dbReference type="STRING" id="189918.Mkms_4258"/>
<dbReference type="KEGG" id="mkm:Mkms_4258"/>
<dbReference type="HOGENOM" id="CLU_154525_0_0_11"/>
<dbReference type="OrthoDB" id="4406415at2"/>
<dbReference type="UniPathway" id="UPA00067">
    <property type="reaction ID" value="UER00123"/>
</dbReference>
<dbReference type="GO" id="GO:0033990">
    <property type="term" value="F:ectoine synthase activity"/>
    <property type="evidence" value="ECO:0007669"/>
    <property type="project" value="UniProtKB-EC"/>
</dbReference>
<dbReference type="GO" id="GO:0019491">
    <property type="term" value="P:ectoine biosynthetic process"/>
    <property type="evidence" value="ECO:0007669"/>
    <property type="project" value="UniProtKB-UniRule"/>
</dbReference>
<dbReference type="CDD" id="cd06978">
    <property type="entry name" value="cupin_EctC"/>
    <property type="match status" value="1"/>
</dbReference>
<dbReference type="Gene3D" id="2.60.120.10">
    <property type="entry name" value="Jelly Rolls"/>
    <property type="match status" value="1"/>
</dbReference>
<dbReference type="HAMAP" id="MF_01255">
    <property type="entry name" value="Ectoine_synth"/>
    <property type="match status" value="1"/>
</dbReference>
<dbReference type="InterPro" id="IPR010462">
    <property type="entry name" value="Ectoine_synth"/>
</dbReference>
<dbReference type="InterPro" id="IPR014710">
    <property type="entry name" value="RmlC-like_jellyroll"/>
</dbReference>
<dbReference type="InterPro" id="IPR011051">
    <property type="entry name" value="RmlC_Cupin_sf"/>
</dbReference>
<dbReference type="NCBIfam" id="NF009806">
    <property type="entry name" value="PRK13290.1"/>
    <property type="match status" value="1"/>
</dbReference>
<dbReference type="PANTHER" id="PTHR39289">
    <property type="match status" value="1"/>
</dbReference>
<dbReference type="PANTHER" id="PTHR39289:SF1">
    <property type="entry name" value="L-ECTOINE SYNTHASE"/>
    <property type="match status" value="1"/>
</dbReference>
<dbReference type="Pfam" id="PF06339">
    <property type="entry name" value="Ectoine_synth"/>
    <property type="match status" value="1"/>
</dbReference>
<dbReference type="SUPFAM" id="SSF51182">
    <property type="entry name" value="RmlC-like cupins"/>
    <property type="match status" value="1"/>
</dbReference>
<protein>
    <recommendedName>
        <fullName evidence="1">L-ectoine synthase</fullName>
        <ecNumber evidence="1">4.2.1.108</ecNumber>
    </recommendedName>
    <alternativeName>
        <fullName evidence="1">N-acetyldiaminobutyrate dehydratase</fullName>
    </alternativeName>
</protein>
<comment type="function">
    <text evidence="1">Catalyzes the circularization of gamma-N-acetyl-alpha,gamma-diaminobutyric acid (ADABA) to ectoine (1,4,5,6-tetrahydro-2-methyl-4-pyrimidine carboxylic acid), which is an excellent osmoprotectant.</text>
</comment>
<comment type="catalytic activity">
    <reaction evidence="1">
        <text>(2S)-4-acetamido-2-aminobutanoate = L-ectoine + H2O</text>
        <dbReference type="Rhea" id="RHEA:17281"/>
        <dbReference type="ChEBI" id="CHEBI:15377"/>
        <dbReference type="ChEBI" id="CHEBI:58515"/>
        <dbReference type="ChEBI" id="CHEBI:58929"/>
        <dbReference type="EC" id="4.2.1.108"/>
    </reaction>
</comment>
<comment type="pathway">
    <text evidence="1">Amine and polyamine biosynthesis; ectoine biosynthesis; L-ectoine from L-aspartate 4-semialdehyde: step 3/3.</text>
</comment>
<comment type="similarity">
    <text evidence="1">Belongs to the ectoine synthase family.</text>
</comment>
<reference key="1">
    <citation type="submission" date="2006-12" db="EMBL/GenBank/DDBJ databases">
        <title>Complete sequence of chromosome of Mycobacterium sp. KMS.</title>
        <authorList>
            <consortium name="US DOE Joint Genome Institute"/>
            <person name="Copeland A."/>
            <person name="Lucas S."/>
            <person name="Lapidus A."/>
            <person name="Barry K."/>
            <person name="Detter J.C."/>
            <person name="Glavina del Rio T."/>
            <person name="Hammon N."/>
            <person name="Israni S."/>
            <person name="Dalin E."/>
            <person name="Tice H."/>
            <person name="Pitluck S."/>
            <person name="Kiss H."/>
            <person name="Brettin T."/>
            <person name="Bruce D."/>
            <person name="Han C."/>
            <person name="Tapia R."/>
            <person name="Gilna P."/>
            <person name="Schmutz J."/>
            <person name="Larimer F."/>
            <person name="Land M."/>
            <person name="Hauser L."/>
            <person name="Kyrpides N."/>
            <person name="Mikhailova N."/>
            <person name="Miller C.D."/>
            <person name="Richardson P."/>
        </authorList>
    </citation>
    <scope>NUCLEOTIDE SEQUENCE [LARGE SCALE GENOMIC DNA]</scope>
    <source>
        <strain>KMS</strain>
    </source>
</reference>
<evidence type="ECO:0000255" key="1">
    <source>
        <dbReference type="HAMAP-Rule" id="MF_01255"/>
    </source>
</evidence>
<accession>A1UKU2</accession>
<proteinExistence type="inferred from homology"/>
<name>ECTC_MYCSK</name>
<feature type="chain" id="PRO_1000067232" description="L-ectoine synthase">
    <location>
        <begin position="1"/>
        <end position="129"/>
    </location>
</feature>
<sequence>MIVRTTQAITGTERDVAAKDWRSKRIVLADDGVGFSFHETTINANSVSEFHYRHHVEAVWVVEGSGTLTDHETGEEFPLLPGTMYLLDGHERHRVTCHEQLRMLCVFNPPVTGQEVHDESGAYPAPVAS</sequence>
<keyword id="KW-0456">Lyase</keyword>
<organism>
    <name type="scientific">Mycobacterium sp. (strain KMS)</name>
    <dbReference type="NCBI Taxonomy" id="189918"/>
    <lineage>
        <taxon>Bacteria</taxon>
        <taxon>Bacillati</taxon>
        <taxon>Actinomycetota</taxon>
        <taxon>Actinomycetes</taxon>
        <taxon>Mycobacteriales</taxon>
        <taxon>Mycobacteriaceae</taxon>
        <taxon>Mycobacterium</taxon>
    </lineage>
</organism>
<gene>
    <name evidence="1" type="primary">ectC</name>
    <name type="ordered locus">Mkms_4258</name>
</gene>